<keyword id="KW-0413">Isomerase</keyword>
<keyword id="KW-0423">Lactose metabolism</keyword>
<protein>
    <recommendedName>
        <fullName evidence="1">Galactose-6-phosphate isomerase subunit LacA</fullName>
        <ecNumber evidence="1">5.3.1.26</ecNumber>
    </recommendedName>
</protein>
<name>LACA_STAAT</name>
<evidence type="ECO:0000255" key="1">
    <source>
        <dbReference type="HAMAP-Rule" id="MF_01555"/>
    </source>
</evidence>
<feature type="chain" id="PRO_1000087786" description="Galactose-6-phosphate isomerase subunit LacA">
    <location>
        <begin position="1"/>
        <end position="142"/>
    </location>
</feature>
<proteinExistence type="inferred from homology"/>
<organism>
    <name type="scientific">Staphylococcus aureus (strain USA300 / TCH1516)</name>
    <dbReference type="NCBI Taxonomy" id="451516"/>
    <lineage>
        <taxon>Bacteria</taxon>
        <taxon>Bacillati</taxon>
        <taxon>Bacillota</taxon>
        <taxon>Bacilli</taxon>
        <taxon>Bacillales</taxon>
        <taxon>Staphylococcaceae</taxon>
        <taxon>Staphylococcus</taxon>
    </lineage>
</organism>
<accession>A8Z305</accession>
<comment type="catalytic activity">
    <reaction evidence="1">
        <text>aldehydo-D-galactose 6-phosphate = keto-D-tagatose 6-phosphate</text>
        <dbReference type="Rhea" id="RHEA:13033"/>
        <dbReference type="ChEBI" id="CHEBI:58255"/>
        <dbReference type="ChEBI" id="CHEBI:134283"/>
        <dbReference type="EC" id="5.3.1.26"/>
    </reaction>
</comment>
<comment type="pathway">
    <text evidence="1">Carbohydrate metabolism; D-galactose 6-phosphate degradation; D-tagatose 6-phosphate from D-galactose 6-phosphate: step 1/1.</text>
</comment>
<comment type="subunit">
    <text evidence="1">Heteromultimeric protein consisting of LacA and LacB.</text>
</comment>
<comment type="similarity">
    <text evidence="1">Belongs to the LacAB/RpiB family.</text>
</comment>
<sequence length="142" mass="15395">MAIIIGSDEAGKRLKEVIKSYLLDNKYDVVDVTEGQEVDFVDATLAVAKDVQSQEGNLGIVIDAFGAGSFMVATKIKGMIAAEVSDERSGYMTRGHNNSRMITMGSEIVGDTLAKNVVKGFVEGKYDGGRHQIRVDMLNKMC</sequence>
<reference key="1">
    <citation type="journal article" date="2007" name="BMC Microbiol.">
        <title>Subtle genetic changes enhance virulence of methicillin resistant and sensitive Staphylococcus aureus.</title>
        <authorList>
            <person name="Highlander S.K."/>
            <person name="Hulten K.G."/>
            <person name="Qin X."/>
            <person name="Jiang H."/>
            <person name="Yerrapragada S."/>
            <person name="Mason E.O. Jr."/>
            <person name="Shang Y."/>
            <person name="Williams T.M."/>
            <person name="Fortunov R.M."/>
            <person name="Liu Y."/>
            <person name="Igboeli O."/>
            <person name="Petrosino J."/>
            <person name="Tirumalai M."/>
            <person name="Uzman A."/>
            <person name="Fox G.E."/>
            <person name="Cardenas A.M."/>
            <person name="Muzny D.M."/>
            <person name="Hemphill L."/>
            <person name="Ding Y."/>
            <person name="Dugan S."/>
            <person name="Blyth P.R."/>
            <person name="Buhay C.J."/>
            <person name="Dinh H.H."/>
            <person name="Hawes A.C."/>
            <person name="Holder M."/>
            <person name="Kovar C.L."/>
            <person name="Lee S.L."/>
            <person name="Liu W."/>
            <person name="Nazareth L.V."/>
            <person name="Wang Q."/>
            <person name="Zhou J."/>
            <person name="Kaplan S.L."/>
            <person name="Weinstock G.M."/>
        </authorList>
    </citation>
    <scope>NUCLEOTIDE SEQUENCE [LARGE SCALE GENOMIC DNA]</scope>
    <source>
        <strain>USA300 / TCH1516</strain>
    </source>
</reference>
<dbReference type="EC" id="5.3.1.26" evidence="1"/>
<dbReference type="EMBL" id="CP000730">
    <property type="protein sequence ID" value="ABX30182.1"/>
    <property type="molecule type" value="Genomic_DNA"/>
</dbReference>
<dbReference type="RefSeq" id="WP_000974608.1">
    <property type="nucleotide sequence ID" value="NC_010079.1"/>
</dbReference>
<dbReference type="SMR" id="A8Z305"/>
<dbReference type="GeneID" id="98347039"/>
<dbReference type="KEGG" id="sax:USA300HOU_2188"/>
<dbReference type="HOGENOM" id="CLU_091396_4_2_9"/>
<dbReference type="UniPathway" id="UPA00702">
    <property type="reaction ID" value="UER00714"/>
</dbReference>
<dbReference type="GO" id="GO:0050044">
    <property type="term" value="F:galactose-6-phosphate isomerase activity"/>
    <property type="evidence" value="ECO:0007669"/>
    <property type="project" value="UniProtKB-UniRule"/>
</dbReference>
<dbReference type="GO" id="GO:0004751">
    <property type="term" value="F:ribose-5-phosphate isomerase activity"/>
    <property type="evidence" value="ECO:0007669"/>
    <property type="project" value="TreeGrafter"/>
</dbReference>
<dbReference type="GO" id="GO:0019316">
    <property type="term" value="P:D-allose catabolic process"/>
    <property type="evidence" value="ECO:0007669"/>
    <property type="project" value="TreeGrafter"/>
</dbReference>
<dbReference type="GO" id="GO:0019388">
    <property type="term" value="P:galactose catabolic process"/>
    <property type="evidence" value="ECO:0007669"/>
    <property type="project" value="UniProtKB-UniPathway"/>
</dbReference>
<dbReference type="GO" id="GO:0019512">
    <property type="term" value="P:lactose catabolic process via tagatose-6-phosphate"/>
    <property type="evidence" value="ECO:0007669"/>
    <property type="project" value="UniProtKB-UniRule"/>
</dbReference>
<dbReference type="GO" id="GO:0009052">
    <property type="term" value="P:pentose-phosphate shunt, non-oxidative branch"/>
    <property type="evidence" value="ECO:0007669"/>
    <property type="project" value="TreeGrafter"/>
</dbReference>
<dbReference type="Gene3D" id="3.40.1400.10">
    <property type="entry name" value="Sugar-phosphate isomerase, RpiB/LacA/LacB"/>
    <property type="match status" value="1"/>
</dbReference>
<dbReference type="HAMAP" id="MF_01555">
    <property type="entry name" value="LacA"/>
    <property type="match status" value="1"/>
</dbReference>
<dbReference type="InterPro" id="IPR004783">
    <property type="entry name" value="LacA"/>
</dbReference>
<dbReference type="InterPro" id="IPR003500">
    <property type="entry name" value="RpiB_LacA_LacB"/>
</dbReference>
<dbReference type="InterPro" id="IPR036569">
    <property type="entry name" value="RpiB_LacA_LacB_sf"/>
</dbReference>
<dbReference type="NCBIfam" id="TIGR01118">
    <property type="entry name" value="lacA"/>
    <property type="match status" value="1"/>
</dbReference>
<dbReference type="NCBIfam" id="NF006380">
    <property type="entry name" value="PRK08621.1"/>
    <property type="match status" value="1"/>
</dbReference>
<dbReference type="NCBIfam" id="TIGR00689">
    <property type="entry name" value="rpiB_lacA_lacB"/>
    <property type="match status" value="1"/>
</dbReference>
<dbReference type="PANTHER" id="PTHR30345:SF5">
    <property type="entry name" value="GALACTOSE-6-PHOSPHATE ISOMERASE SUBUNIT LACA"/>
    <property type="match status" value="1"/>
</dbReference>
<dbReference type="PANTHER" id="PTHR30345">
    <property type="entry name" value="RIBOSE-5-PHOSPHATE ISOMERASE B"/>
    <property type="match status" value="1"/>
</dbReference>
<dbReference type="Pfam" id="PF02502">
    <property type="entry name" value="LacAB_rpiB"/>
    <property type="match status" value="1"/>
</dbReference>
<dbReference type="PIRSF" id="PIRSF005384">
    <property type="entry name" value="RpiB_LacA_B"/>
    <property type="match status" value="1"/>
</dbReference>
<dbReference type="SUPFAM" id="SSF89623">
    <property type="entry name" value="Ribose/Galactose isomerase RpiB/AlsB"/>
    <property type="match status" value="1"/>
</dbReference>
<gene>
    <name evidence="1" type="primary">lacA</name>
    <name type="ordered locus">USA300HOU_2188</name>
</gene>